<reference key="1">
    <citation type="submission" date="2003-10" db="EMBL/GenBank/DDBJ databases">
        <title>Isolation and characterization of cDNA for macaque neurological disease genes.</title>
        <authorList>
            <person name="Kusuda J."/>
            <person name="Osada N."/>
            <person name="Tanuma R."/>
            <person name="Hirata M."/>
            <person name="Sugano S."/>
            <person name="Hashimoto K."/>
        </authorList>
    </citation>
    <scope>NUCLEOTIDE SEQUENCE [LARGE SCALE MRNA]</scope>
    <source>
        <tissue>Frontal cortex</tissue>
    </source>
</reference>
<reference key="2">
    <citation type="submission" date="2005-06" db="EMBL/GenBank/DDBJ databases">
        <title>DNA sequences of macaque genes expressed in brain or testis and its evolutionary implications.</title>
        <authorList>
            <consortium name="International consortium for macaque cDNA sequencing and analysis"/>
        </authorList>
    </citation>
    <scope>NUCLEOTIDE SEQUENCE [LARGE SCALE MRNA]</scope>
    <source>
        <tissue>Testis</tissue>
    </source>
</reference>
<protein>
    <recommendedName>
        <fullName>Survival motor neuron protein</fullName>
    </recommendedName>
</protein>
<keyword id="KW-0007">Acetylation</keyword>
<keyword id="KW-0966">Cell projection</keyword>
<keyword id="KW-0963">Cytoplasm</keyword>
<keyword id="KW-1017">Isopeptide bond</keyword>
<keyword id="KW-0507">mRNA processing</keyword>
<keyword id="KW-0508">mRNA splicing</keyword>
<keyword id="KW-0524">Neurogenesis</keyword>
<keyword id="KW-0539">Nucleus</keyword>
<keyword id="KW-0597">Phosphoprotein</keyword>
<keyword id="KW-1185">Reference proteome</keyword>
<keyword id="KW-0694">RNA-binding</keyword>
<keyword id="KW-0832">Ubl conjugation</keyword>
<gene>
    <name type="primary">SMN1</name>
    <name type="synonym">SMN</name>
    <name type="ORF">QflA-22331</name>
    <name type="ORF">QtsA-10002</name>
</gene>
<evidence type="ECO:0000250" key="1"/>
<evidence type="ECO:0000250" key="2">
    <source>
        <dbReference type="UniProtKB" id="P97801"/>
    </source>
</evidence>
<evidence type="ECO:0000250" key="3">
    <source>
        <dbReference type="UniProtKB" id="Q16637"/>
    </source>
</evidence>
<evidence type="ECO:0000255" key="4">
    <source>
        <dbReference type="PROSITE-ProRule" id="PRU00211"/>
    </source>
</evidence>
<evidence type="ECO:0000256" key="5">
    <source>
        <dbReference type="SAM" id="MobiDB-lite"/>
    </source>
</evidence>
<evidence type="ECO:0000305" key="6"/>
<comment type="function">
    <text evidence="3">The SMN complex catalyzes the assembly of small nuclear ribonucleoproteins (snRNPs), the building blocks of the spliceosome, and thereby plays an important role in the splicing of cellular pre-mRNAs. Most spliceosomal snRNPs contain a common set of Sm proteins SNRPB, SNRPD1, SNRPD2, SNRPD3, SNRPE, SNRPF and SNRPG that assemble in a heptameric protein ring on the Sm site of the small nuclear RNA to form the core snRNP (Sm core). In the cytosol, the Sm proteins SNRPD1, SNRPD2, SNRPE, SNRPF and SNRPG are trapped in an inactive 6S pICln-Sm complex by the chaperone CLNS1A that controls the assembly of the core snRNP. To assemble core snRNPs, the SMN complex accepts the trapped 5Sm proteins from CLNS1A forming an intermediate. Binding of snRNA inside 5Sm ultimately triggers eviction of the SMN complex, thereby allowing binding of SNRPD3 and SNRPB to complete assembly of the core snRNP. Within the SMN complex, SMN1 acts as a structural backbone and together with GEMIN2 it gathers the Sm complex subunits. Ensures the correct splicing of U12 intron-containing genes that may be important for normal motor and proprioceptive neurons development. Also required for resolving RNA-DNA hybrids created by RNA polymerase II, that form R-loop in transcription terminal regions, an important step in proper transcription termination. May also play a role in the metabolism of small nucleolar ribonucleoprotein (snoRNPs).</text>
</comment>
<comment type="subunit">
    <text evidence="3">Homooligomer; may form higher order homooligomers in the dimer to octamer range. Part of the core SMN complex that contains SMN1, GEMIN2/SIP1, DDX20/GEMIN3, GEMIN4, GEMIN5, GEMIN6, GEMIN7, GEMIN8 and STRAP/UNRIP. Part of the SMN-Sm complex that contains SMN1, GEMIN2/SIP1, DDX20/GEMIN3, GEMIN4, GEMIN5, GEMIN6, GEMIN7, GEMIN8, STRAP/UNRIP and the Sm proteins SNRPB, SNRPD1, SNRPD2, SNRPD3, SNRPE, SNRPF and SNRPG. Component of an import snRNP complex composed of KPNB1, RNUT1, SMN1 and ZNF259. Interacts with DDX20, FBL, NOLA1, RNUT1, SYNCRIP and with several spliceosomal snRNP core Sm proteins, including SNRPB, SNRPD1, SNRPD2, SNRPD3, SNRPE and ILF3. Interacts with GEMIN2; the interaction is direct. Interacts with GEMIN3; the interaction is direct. Interacts with GEMIN8; the interaction is direct. Interacts with SNRPB; the interaction is direct. Interacts (via Tudor domain) with SNRPD1 (via C-terminus); the interaction is direct. Interacts with SNRPD2; the interaction is direct. Interacts (via Tudor domain) with SNRPD3 (via C-terminus); the interaction is direct. Interacts with SNRPE; the interaction is direct. Interacts with OSTF1, LSM10, LSM11 and RPP20/POP7. Interacts (via C-terminal region) with ZPR1 (via C-terminal region). Interacts (via Tudor domain) with COIL. Interacts with SETX; recruits SETX to POLR2A. Interacts with POLR2A (via the C-terminal domain (CTD)). Interacts with PRMT5. Interacts with XRN2. Interacts (via C-terminus) with FMR1 (via C-terminus); the interaction is direct and occurs in a RNA-independent manner. Interacts (via Tudor domain) with SF3B2 ('Arg-508'-methylated form). Interacts with WRAP53/TCAB1. Interacts (via Tudor domain) with ELAVL4 in an RNA-independent manner; the interaction is required for localization of ELAVL4 to RNA granules. Interacts with FRG1.</text>
</comment>
<comment type="subcellular location">
    <subcellularLocation>
        <location evidence="3">Nucleus</location>
        <location evidence="3">Gem</location>
    </subcellularLocation>
    <subcellularLocation>
        <location evidence="3">Nucleus</location>
        <location evidence="3">Cajal body</location>
    </subcellularLocation>
    <subcellularLocation>
        <location evidence="3">Cytoplasm</location>
    </subcellularLocation>
    <subcellularLocation>
        <location evidence="3">Cytoplasmic granule</location>
    </subcellularLocation>
    <subcellularLocation>
        <location evidence="3">Perikaryon</location>
    </subcellularLocation>
    <subcellularLocation>
        <location evidence="3">Cell projection</location>
        <location evidence="3">Neuron projection</location>
    </subcellularLocation>
    <subcellularLocation>
        <location evidence="2">Cell projection</location>
        <location evidence="2">Axon</location>
    </subcellularLocation>
    <subcellularLocation>
        <location evidence="2">Cytoplasm</location>
        <location evidence="2">Myofibril</location>
        <location evidence="2">Sarcomere</location>
        <location evidence="2">Z line</location>
    </subcellularLocation>
    <text evidence="2 3">Colocalizes with actin and at the Z-line of skeletal muscle (By similarity). Under stress conditions colocalizes with RPP20/POP7 in punctuated cytoplasmic granules. Colocalized and redistributed with ZPR1 from the cytoplasm to nuclear gems (Gemini of coiled bodies) and Cajal bodies. Colocalizes with FMR1 in cytoplasmic granules in the soma and neurite cell processes (By similarity).</text>
</comment>
<comment type="domain">
    <text evidence="3">The Tudor domain mediates association with dimethylarginines, which are common in snRNP proteins.</text>
</comment>
<comment type="similarity">
    <text evidence="6">Belongs to the SMN family.</text>
</comment>
<name>SMN_MACFA</name>
<organism>
    <name type="scientific">Macaca fascicularis</name>
    <name type="common">Crab-eating macaque</name>
    <name type="synonym">Cynomolgus monkey</name>
    <dbReference type="NCBI Taxonomy" id="9541"/>
    <lineage>
        <taxon>Eukaryota</taxon>
        <taxon>Metazoa</taxon>
        <taxon>Chordata</taxon>
        <taxon>Craniata</taxon>
        <taxon>Vertebrata</taxon>
        <taxon>Euteleostomi</taxon>
        <taxon>Mammalia</taxon>
        <taxon>Eutheria</taxon>
        <taxon>Euarchontoglires</taxon>
        <taxon>Primates</taxon>
        <taxon>Haplorrhini</taxon>
        <taxon>Catarrhini</taxon>
        <taxon>Cercopithecidae</taxon>
        <taxon>Cercopithecinae</taxon>
        <taxon>Macaca</taxon>
    </lineage>
</organism>
<dbReference type="EMBL" id="AB125201">
    <property type="protein sequence ID" value="BAD51989.1"/>
    <property type="molecule type" value="mRNA"/>
</dbReference>
<dbReference type="EMBL" id="AB178956">
    <property type="protein sequence ID" value="BAE02007.1"/>
    <property type="molecule type" value="mRNA"/>
</dbReference>
<dbReference type="RefSeq" id="NP_001270556.1">
    <property type="nucleotide sequence ID" value="NM_001283627.1"/>
</dbReference>
<dbReference type="BMRB" id="Q4R4F8"/>
<dbReference type="SMR" id="Q4R4F8"/>
<dbReference type="STRING" id="9541.ENSMFAP00000010636"/>
<dbReference type="Ensembl" id="ENSMFAT00000067545.2">
    <property type="protein sequence ID" value="ENSMFAP00000017006.1"/>
    <property type="gene ID" value="ENSMFAG00000031523.2"/>
</dbReference>
<dbReference type="VEuPathDB" id="HostDB:ENSMFAG00000031523"/>
<dbReference type="eggNOG" id="KOG4327">
    <property type="taxonomic scope" value="Eukaryota"/>
</dbReference>
<dbReference type="GeneTree" id="ENSGT00940000153352"/>
<dbReference type="OMA" id="DETVNGM"/>
<dbReference type="Proteomes" id="UP000233100">
    <property type="component" value="Chromosome 6"/>
</dbReference>
<dbReference type="Bgee" id="ENSMFAG00000031523">
    <property type="expression patterns" value="Expressed in pituitary gland and 13 other cell types or tissues"/>
</dbReference>
<dbReference type="GO" id="GO:0030424">
    <property type="term" value="C:axon"/>
    <property type="evidence" value="ECO:0007669"/>
    <property type="project" value="UniProtKB-SubCell"/>
</dbReference>
<dbReference type="GO" id="GO:0015030">
    <property type="term" value="C:Cajal body"/>
    <property type="evidence" value="ECO:0000250"/>
    <property type="project" value="UniProtKB"/>
</dbReference>
<dbReference type="GO" id="GO:0005737">
    <property type="term" value="C:cytoplasm"/>
    <property type="evidence" value="ECO:0000250"/>
    <property type="project" value="UniProtKB"/>
</dbReference>
<dbReference type="GO" id="GO:0036464">
    <property type="term" value="C:cytoplasmic ribonucleoprotein granule"/>
    <property type="evidence" value="ECO:0000250"/>
    <property type="project" value="UniProtKB"/>
</dbReference>
<dbReference type="GO" id="GO:0005829">
    <property type="term" value="C:cytosol"/>
    <property type="evidence" value="ECO:0000250"/>
    <property type="project" value="UniProtKB"/>
</dbReference>
<dbReference type="GO" id="GO:0097504">
    <property type="term" value="C:Gemini of Cajal bodies"/>
    <property type="evidence" value="ECO:0000250"/>
    <property type="project" value="UniProtKB"/>
</dbReference>
<dbReference type="GO" id="GO:0043005">
    <property type="term" value="C:neuron projection"/>
    <property type="evidence" value="ECO:0000250"/>
    <property type="project" value="UniProtKB"/>
</dbReference>
<dbReference type="GO" id="GO:0005654">
    <property type="term" value="C:nucleoplasm"/>
    <property type="evidence" value="ECO:0000250"/>
    <property type="project" value="UniProtKB"/>
</dbReference>
<dbReference type="GO" id="GO:0005634">
    <property type="term" value="C:nucleus"/>
    <property type="evidence" value="ECO:0000250"/>
    <property type="project" value="UniProtKB"/>
</dbReference>
<dbReference type="GO" id="GO:0043204">
    <property type="term" value="C:perikaryon"/>
    <property type="evidence" value="ECO:0000250"/>
    <property type="project" value="UniProtKB"/>
</dbReference>
<dbReference type="GO" id="GO:0032797">
    <property type="term" value="C:SMN complex"/>
    <property type="evidence" value="ECO:0000250"/>
    <property type="project" value="UniProtKB"/>
</dbReference>
<dbReference type="GO" id="GO:0034719">
    <property type="term" value="C:SMN-Sm protein complex"/>
    <property type="evidence" value="ECO:0000250"/>
    <property type="project" value="UniProtKB"/>
</dbReference>
<dbReference type="GO" id="GO:0030018">
    <property type="term" value="C:Z disc"/>
    <property type="evidence" value="ECO:0007669"/>
    <property type="project" value="UniProtKB-SubCell"/>
</dbReference>
<dbReference type="GO" id="GO:0003723">
    <property type="term" value="F:RNA binding"/>
    <property type="evidence" value="ECO:0007669"/>
    <property type="project" value="UniProtKB-KW"/>
</dbReference>
<dbReference type="GO" id="GO:0006353">
    <property type="term" value="P:DNA-templated transcription termination"/>
    <property type="evidence" value="ECO:0000250"/>
    <property type="project" value="UniProtKB"/>
</dbReference>
<dbReference type="GO" id="GO:0007399">
    <property type="term" value="P:nervous system development"/>
    <property type="evidence" value="ECO:0007669"/>
    <property type="project" value="UniProtKB-KW"/>
</dbReference>
<dbReference type="GO" id="GO:0000387">
    <property type="term" value="P:spliceosomal snRNP assembly"/>
    <property type="evidence" value="ECO:0000250"/>
    <property type="project" value="UniProtKB"/>
</dbReference>
<dbReference type="CDD" id="cd22852">
    <property type="entry name" value="SMN_C"/>
    <property type="match status" value="1"/>
</dbReference>
<dbReference type="CDD" id="cd22851">
    <property type="entry name" value="SMN_N"/>
    <property type="match status" value="1"/>
</dbReference>
<dbReference type="CDD" id="cd20398">
    <property type="entry name" value="Tudor_SMN"/>
    <property type="match status" value="1"/>
</dbReference>
<dbReference type="FunFam" id="3.40.190.10:FF:000110">
    <property type="entry name" value="Survival motor neuron protein 1"/>
    <property type="match status" value="1"/>
</dbReference>
<dbReference type="FunFam" id="2.30.30.140:FF:000038">
    <property type="entry name" value="Survival of motor neuron-related-splicing factor 30"/>
    <property type="match status" value="1"/>
</dbReference>
<dbReference type="Gene3D" id="2.30.30.140">
    <property type="match status" value="1"/>
</dbReference>
<dbReference type="Gene3D" id="3.40.190.10">
    <property type="entry name" value="Periplasmic binding protein-like II"/>
    <property type="match status" value="1"/>
</dbReference>
<dbReference type="InterPro" id="IPR040424">
    <property type="entry name" value="Smn1"/>
</dbReference>
<dbReference type="InterPro" id="IPR047313">
    <property type="entry name" value="SMN_C"/>
</dbReference>
<dbReference type="InterPro" id="IPR049481">
    <property type="entry name" value="SMN_G2-BD"/>
</dbReference>
<dbReference type="InterPro" id="IPR010304">
    <property type="entry name" value="SMN_Tudor"/>
</dbReference>
<dbReference type="InterPro" id="IPR002999">
    <property type="entry name" value="Tudor"/>
</dbReference>
<dbReference type="InterPro" id="IPR047298">
    <property type="entry name" value="Tudor_SMN_eumet"/>
</dbReference>
<dbReference type="PANTHER" id="PTHR39267:SF1">
    <property type="entry name" value="SURVIVAL MOTOR NEURON PROTEIN"/>
    <property type="match status" value="1"/>
</dbReference>
<dbReference type="PANTHER" id="PTHR39267">
    <property type="entry name" value="SURVIVAL MOTOR NEURON-LIKE PROTEIN 1"/>
    <property type="match status" value="1"/>
</dbReference>
<dbReference type="Pfam" id="PF20636">
    <property type="entry name" value="SMN_G2-BD"/>
    <property type="match status" value="1"/>
</dbReference>
<dbReference type="Pfam" id="PF06003">
    <property type="entry name" value="SMN_Tudor"/>
    <property type="match status" value="1"/>
</dbReference>
<dbReference type="Pfam" id="PF20635">
    <property type="entry name" value="SMN_YG-box"/>
    <property type="match status" value="1"/>
</dbReference>
<dbReference type="SMART" id="SM00333">
    <property type="entry name" value="TUDOR"/>
    <property type="match status" value="1"/>
</dbReference>
<dbReference type="SUPFAM" id="SSF63748">
    <property type="entry name" value="Tudor/PWWP/MBT"/>
    <property type="match status" value="1"/>
</dbReference>
<dbReference type="PROSITE" id="PS50304">
    <property type="entry name" value="TUDOR"/>
    <property type="match status" value="1"/>
</dbReference>
<sequence>MAMSSGGSGGGVPEQEDSVLFRRGTGQSDDSDIWDDTALIKAYDKAVASFKHALKNGDICETSGKPKTTPKRKPAKKNKSQKKNTAAPLKQWKVGDKCSAIWSEDGCIYPATIASVDFKRETCVVVYTGYGNREEQNLSDLLSPISEVANNIEQNAQENENESQVSTDESENSRSPGSKSDNIKSKSAPWNSFLPPPPPMPGPRLGPGKPGLKFNGPPPPPPPPPPHLLSCWMPPFPSGPPIIPPPPPICPDSLDDADALGSMLISWYMSGYHTGYYMGFRQNQKEGRCSHSLN</sequence>
<accession>Q4R4F8</accession>
<accession>Q60HC6</accession>
<proteinExistence type="evidence at transcript level"/>
<feature type="initiator methionine" description="Removed" evidence="3">
    <location>
        <position position="1"/>
    </location>
</feature>
<feature type="chain" id="PRO_0000333769" description="Survival motor neuron protein">
    <location>
        <begin position="2"/>
        <end position="294"/>
    </location>
</feature>
<feature type="domain" description="Tudor" evidence="4">
    <location>
        <begin position="91"/>
        <end position="151"/>
    </location>
</feature>
<feature type="region of interest" description="Disordered" evidence="5">
    <location>
        <begin position="1"/>
        <end position="32"/>
    </location>
</feature>
<feature type="region of interest" description="P1 (binding site for GEMIN2)" evidence="1">
    <location>
        <begin position="13"/>
        <end position="44"/>
    </location>
</feature>
<feature type="region of interest" description="Disordered" evidence="5">
    <location>
        <begin position="58"/>
        <end position="88"/>
    </location>
</feature>
<feature type="region of interest" description="Required for interaction with RPP20/POP7" evidence="1">
    <location>
        <begin position="97"/>
        <end position="209"/>
    </location>
</feature>
<feature type="region of interest" description="Disordered" evidence="5">
    <location>
        <begin position="156"/>
        <end position="222"/>
    </location>
</feature>
<feature type="region of interest" description="P2 (binding site for SM B)" evidence="1">
    <location>
        <begin position="240"/>
        <end position="267"/>
    </location>
</feature>
<feature type="region of interest" description="Required for interaction with SYNCRIP" evidence="1">
    <location>
        <begin position="279"/>
        <end position="294"/>
    </location>
</feature>
<feature type="compositionally biased region" description="Gly residues" evidence="5">
    <location>
        <begin position="1"/>
        <end position="12"/>
    </location>
</feature>
<feature type="compositionally biased region" description="Basic residues" evidence="5">
    <location>
        <begin position="68"/>
        <end position="82"/>
    </location>
</feature>
<feature type="compositionally biased region" description="Low complexity" evidence="5">
    <location>
        <begin position="156"/>
        <end position="166"/>
    </location>
</feature>
<feature type="compositionally biased region" description="Pro residues" evidence="5">
    <location>
        <begin position="194"/>
        <end position="204"/>
    </location>
</feature>
<feature type="modified residue" description="N-acetylalanine" evidence="3">
    <location>
        <position position="2"/>
    </location>
</feature>
<feature type="modified residue" description="Phosphoserine; by PKA" evidence="3">
    <location>
        <position position="4"/>
    </location>
</feature>
<feature type="modified residue" description="Phosphoserine; by PKA" evidence="3">
    <location>
        <position position="5"/>
    </location>
</feature>
<feature type="modified residue" description="Phosphoserine; by PKA" evidence="3">
    <location>
        <position position="8"/>
    </location>
</feature>
<feature type="modified residue" description="Phosphothreonine" evidence="3">
    <location>
        <position position="25"/>
    </location>
</feature>
<feature type="modified residue" description="Phosphoserine" evidence="3">
    <location>
        <position position="28"/>
    </location>
</feature>
<feature type="modified residue" description="Phosphoserine" evidence="3">
    <location>
        <position position="31"/>
    </location>
</feature>
<feature type="modified residue" description="Phosphothreonine" evidence="3">
    <location>
        <position position="69"/>
    </location>
</feature>
<feature type="modified residue" description="Phosphothreonine; by PKA" evidence="3">
    <location>
        <position position="85"/>
    </location>
</feature>
<feature type="modified residue" description="Phosphoserine; by PKA" evidence="3">
    <location>
        <position position="187"/>
    </location>
</feature>
<feature type="cross-link" description="Glycyl lysine isopeptide (Lys-Gly) (interchain with G-Cter in SUMO2)" evidence="3">
    <location>
        <position position="51"/>
    </location>
</feature>
<feature type="cross-link" description="Glycyl lysine isopeptide (Lys-Gly) (interchain with G-Cter in SUMO2)" evidence="3">
    <location>
        <position position="209"/>
    </location>
</feature>
<feature type="sequence conflict" description="In Ref. 1; BAD51989." evidence="6" ref="1">
    <original>I</original>
    <variation>T</variation>
    <location>
        <position position="108"/>
    </location>
</feature>